<dbReference type="EC" id="1.4.4.2" evidence="1"/>
<dbReference type="EMBL" id="CP000526">
    <property type="protein sequence ID" value="ABM50712.1"/>
    <property type="molecule type" value="Genomic_DNA"/>
</dbReference>
<dbReference type="RefSeq" id="WP_004195877.1">
    <property type="nucleotide sequence ID" value="NC_008785.1"/>
</dbReference>
<dbReference type="SMR" id="A1V8N7"/>
<dbReference type="GeneID" id="92980672"/>
<dbReference type="KEGG" id="bmv:BMASAVP1_A3312"/>
<dbReference type="HOGENOM" id="CLU_004620_2_1_4"/>
<dbReference type="GO" id="GO:0005829">
    <property type="term" value="C:cytosol"/>
    <property type="evidence" value="ECO:0007669"/>
    <property type="project" value="TreeGrafter"/>
</dbReference>
<dbReference type="GO" id="GO:0005960">
    <property type="term" value="C:glycine cleavage complex"/>
    <property type="evidence" value="ECO:0007669"/>
    <property type="project" value="TreeGrafter"/>
</dbReference>
<dbReference type="GO" id="GO:0016594">
    <property type="term" value="F:glycine binding"/>
    <property type="evidence" value="ECO:0007669"/>
    <property type="project" value="TreeGrafter"/>
</dbReference>
<dbReference type="GO" id="GO:0004375">
    <property type="term" value="F:glycine dehydrogenase (decarboxylating) activity"/>
    <property type="evidence" value="ECO:0007669"/>
    <property type="project" value="UniProtKB-EC"/>
</dbReference>
<dbReference type="GO" id="GO:0030170">
    <property type="term" value="F:pyridoxal phosphate binding"/>
    <property type="evidence" value="ECO:0007669"/>
    <property type="project" value="TreeGrafter"/>
</dbReference>
<dbReference type="GO" id="GO:0019464">
    <property type="term" value="P:glycine decarboxylation via glycine cleavage system"/>
    <property type="evidence" value="ECO:0007669"/>
    <property type="project" value="UniProtKB-UniRule"/>
</dbReference>
<dbReference type="CDD" id="cd00613">
    <property type="entry name" value="GDC-P"/>
    <property type="match status" value="2"/>
</dbReference>
<dbReference type="FunFam" id="3.40.640.10:FF:000005">
    <property type="entry name" value="Glycine dehydrogenase (decarboxylating), mitochondrial"/>
    <property type="match status" value="1"/>
</dbReference>
<dbReference type="FunFam" id="3.90.1150.10:FF:000007">
    <property type="entry name" value="Glycine dehydrogenase (decarboxylating), mitochondrial"/>
    <property type="match status" value="1"/>
</dbReference>
<dbReference type="FunFam" id="3.40.640.10:FF:000007">
    <property type="entry name" value="glycine dehydrogenase (Decarboxylating), mitochondrial"/>
    <property type="match status" value="1"/>
</dbReference>
<dbReference type="Gene3D" id="3.90.1150.10">
    <property type="entry name" value="Aspartate Aminotransferase, domain 1"/>
    <property type="match status" value="2"/>
</dbReference>
<dbReference type="Gene3D" id="3.40.640.10">
    <property type="entry name" value="Type I PLP-dependent aspartate aminotransferase-like (Major domain)"/>
    <property type="match status" value="2"/>
</dbReference>
<dbReference type="HAMAP" id="MF_00711">
    <property type="entry name" value="GcvP"/>
    <property type="match status" value="1"/>
</dbReference>
<dbReference type="InterPro" id="IPR003437">
    <property type="entry name" value="GcvP"/>
</dbReference>
<dbReference type="InterPro" id="IPR049316">
    <property type="entry name" value="GDC-P_C"/>
</dbReference>
<dbReference type="InterPro" id="IPR049315">
    <property type="entry name" value="GDC-P_N"/>
</dbReference>
<dbReference type="InterPro" id="IPR020581">
    <property type="entry name" value="GDC_P"/>
</dbReference>
<dbReference type="InterPro" id="IPR015424">
    <property type="entry name" value="PyrdxlP-dep_Trfase"/>
</dbReference>
<dbReference type="InterPro" id="IPR015421">
    <property type="entry name" value="PyrdxlP-dep_Trfase_major"/>
</dbReference>
<dbReference type="InterPro" id="IPR015422">
    <property type="entry name" value="PyrdxlP-dep_Trfase_small"/>
</dbReference>
<dbReference type="NCBIfam" id="TIGR00461">
    <property type="entry name" value="gcvP"/>
    <property type="match status" value="1"/>
</dbReference>
<dbReference type="NCBIfam" id="NF003346">
    <property type="entry name" value="PRK04366.1"/>
    <property type="match status" value="1"/>
</dbReference>
<dbReference type="PANTHER" id="PTHR11773:SF1">
    <property type="entry name" value="GLYCINE DEHYDROGENASE (DECARBOXYLATING), MITOCHONDRIAL"/>
    <property type="match status" value="1"/>
</dbReference>
<dbReference type="PANTHER" id="PTHR11773">
    <property type="entry name" value="GLYCINE DEHYDROGENASE, DECARBOXYLATING"/>
    <property type="match status" value="1"/>
</dbReference>
<dbReference type="Pfam" id="PF21478">
    <property type="entry name" value="GcvP2_C"/>
    <property type="match status" value="1"/>
</dbReference>
<dbReference type="Pfam" id="PF02347">
    <property type="entry name" value="GDC-P"/>
    <property type="match status" value="2"/>
</dbReference>
<dbReference type="SUPFAM" id="SSF53383">
    <property type="entry name" value="PLP-dependent transferases"/>
    <property type="match status" value="2"/>
</dbReference>
<sequence>MKLEHPDRLMNRTPLSLAALETHDAFAERHIGPDAASQQAMLDTLGFATRAALIDAVIPASIRRAETLPLGPFAQPKSEAEALAALRALADKNQVFRSYIGQGYYDTHTPAVILRNVLENPAWYTAYTPYQPEISQGRLEALLNFQQMVADLTGLEISNASLLDEATAAAEAMTLLQRVGKPQSNVFYVADDVLPQTLEVIKTRAKPIGIEVKSGPAADAAAANAFGVLLQYPGANGDVRDYRALADAIHAAGGHVVVAADILALTVLMPPGEWGADVAVGNTQRFGVPMGFGGPHAAYMAVRDEFKRQMPGRLVGVTVDAQGKPALRLALQTREQHIRREKATSNVCTAQALLAIMASMYAVYHGPRGLKTIALRVNRIAALLAAGIRHLGYATVNDTFFDTLTIDTGARTAQLHAFAQAKRINLRRAGDTRVGVSVDETTTRADLADLLTIFAQAAGATAPDIDALDAGLLPAPALPPSLERTSAYLTHHVFNRHHSETEMLRYLRSLSDKDLALDRSMIPLGSCTMKLNATSEMLPVTWPEFGRIHPFAPAEQTVGYREMIDQLEQMLVAATGYAAVSLQPNAGSQGEYAGLLIIHAYHESRGESHRDVCLIPASAHGTNPASAHMAGMKVVVVACDAQGNVDIADLKAKADAHSHDLAAIMITYPSTHGVFEQNVREICEIVHAHGGQVYVDGANMNAMVGLTAPGQFGGDVSHLNLHKTFCIPHGGGGPGVGPVAVGPHLAKFLPNQRSTGYARGEDGIGAVSAAPYGSASILPISWMYIAMMGAKNLTAATETAILNANYIAKRLAPHYPVLYSGPGGLVAHECILDLRPIKDSSGITVDDVAKRLMDYGFHAPTMSFPVPGTLMVEPTESESQEELDRFIAAMIAIRDEIRAVEEGRADREDNPLRHAPHTAAVVTANEWPHAYSREQAAFPVASLVANKYWPPVGRADNAYGDRNLFCSCVPVSDYA</sequence>
<keyword id="KW-0560">Oxidoreductase</keyword>
<keyword id="KW-0663">Pyridoxal phosphate</keyword>
<reference key="1">
    <citation type="journal article" date="2010" name="Genome Biol. Evol.">
        <title>Continuing evolution of Burkholderia mallei through genome reduction and large-scale rearrangements.</title>
        <authorList>
            <person name="Losada L."/>
            <person name="Ronning C.M."/>
            <person name="DeShazer D."/>
            <person name="Woods D."/>
            <person name="Fedorova N."/>
            <person name="Kim H.S."/>
            <person name="Shabalina S.A."/>
            <person name="Pearson T.R."/>
            <person name="Brinkac L."/>
            <person name="Tan P."/>
            <person name="Nandi T."/>
            <person name="Crabtree J."/>
            <person name="Badger J."/>
            <person name="Beckstrom-Sternberg S."/>
            <person name="Saqib M."/>
            <person name="Schutzer S.E."/>
            <person name="Keim P."/>
            <person name="Nierman W.C."/>
        </authorList>
    </citation>
    <scope>NUCLEOTIDE SEQUENCE [LARGE SCALE GENOMIC DNA]</scope>
    <source>
        <strain>SAVP1</strain>
    </source>
</reference>
<comment type="function">
    <text evidence="1">The glycine cleavage system catalyzes the degradation of glycine. The P protein binds the alpha-amino group of glycine through its pyridoxal phosphate cofactor; CO(2) is released and the remaining methylamine moiety is then transferred to the lipoamide cofactor of the H protein.</text>
</comment>
<comment type="catalytic activity">
    <reaction evidence="1">
        <text>N(6)-[(R)-lipoyl]-L-lysyl-[glycine-cleavage complex H protein] + glycine + H(+) = N(6)-[(R)-S(8)-aminomethyldihydrolipoyl]-L-lysyl-[glycine-cleavage complex H protein] + CO2</text>
        <dbReference type="Rhea" id="RHEA:24304"/>
        <dbReference type="Rhea" id="RHEA-COMP:10494"/>
        <dbReference type="Rhea" id="RHEA-COMP:10495"/>
        <dbReference type="ChEBI" id="CHEBI:15378"/>
        <dbReference type="ChEBI" id="CHEBI:16526"/>
        <dbReference type="ChEBI" id="CHEBI:57305"/>
        <dbReference type="ChEBI" id="CHEBI:83099"/>
        <dbReference type="ChEBI" id="CHEBI:83143"/>
        <dbReference type="EC" id="1.4.4.2"/>
    </reaction>
</comment>
<comment type="cofactor">
    <cofactor evidence="1">
        <name>pyridoxal 5'-phosphate</name>
        <dbReference type="ChEBI" id="CHEBI:597326"/>
    </cofactor>
</comment>
<comment type="subunit">
    <text evidence="1">The glycine cleavage system is composed of four proteins: P, T, L and H.</text>
</comment>
<comment type="similarity">
    <text evidence="1">Belongs to the GcvP family.</text>
</comment>
<proteinExistence type="inferred from homology"/>
<protein>
    <recommendedName>
        <fullName evidence="1">Glycine dehydrogenase (decarboxylating)</fullName>
        <ecNumber evidence="1">1.4.4.2</ecNumber>
    </recommendedName>
    <alternativeName>
        <fullName evidence="1">Glycine cleavage system P-protein</fullName>
    </alternativeName>
    <alternativeName>
        <fullName evidence="1">Glycine decarboxylase</fullName>
    </alternativeName>
    <alternativeName>
        <fullName evidence="1">Glycine dehydrogenase (aminomethyl-transferring)</fullName>
    </alternativeName>
</protein>
<feature type="chain" id="PRO_1000045573" description="Glycine dehydrogenase (decarboxylating)">
    <location>
        <begin position="1"/>
        <end position="975"/>
    </location>
</feature>
<feature type="modified residue" description="N6-(pyridoxal phosphate)lysine" evidence="1">
    <location>
        <position position="723"/>
    </location>
</feature>
<gene>
    <name evidence="1" type="primary">gcvP</name>
    <name type="ordered locus">BMASAVP1_A3312</name>
</gene>
<accession>A1V8N7</accession>
<evidence type="ECO:0000255" key="1">
    <source>
        <dbReference type="HAMAP-Rule" id="MF_00711"/>
    </source>
</evidence>
<organism>
    <name type="scientific">Burkholderia mallei (strain SAVP1)</name>
    <dbReference type="NCBI Taxonomy" id="320388"/>
    <lineage>
        <taxon>Bacteria</taxon>
        <taxon>Pseudomonadati</taxon>
        <taxon>Pseudomonadota</taxon>
        <taxon>Betaproteobacteria</taxon>
        <taxon>Burkholderiales</taxon>
        <taxon>Burkholderiaceae</taxon>
        <taxon>Burkholderia</taxon>
        <taxon>pseudomallei group</taxon>
    </lineage>
</organism>
<name>GCSP_BURMS</name>